<protein>
    <recommendedName>
        <fullName evidence="4">Neurotrophic factor BDNF precursor form</fullName>
        <shortName>proBDNF</shortName>
    </recommendedName>
    <alternativeName>
        <fullName>Brain-derived neurotrophic factor</fullName>
    </alternativeName>
    <component>
        <recommendedName>
            <fullName>Neurotrophic factor BDNF</fullName>
        </recommendedName>
    </component>
</protein>
<keyword id="KW-0165">Cleavage on pair of basic residues</keyword>
<keyword id="KW-1015">Disulfide bond</keyword>
<keyword id="KW-0325">Glycoprotein</keyword>
<keyword id="KW-0339">Growth factor</keyword>
<keyword id="KW-0964">Secreted</keyword>
<keyword id="KW-0732">Signal</keyword>
<proteinExistence type="evidence at transcript level"/>
<reference key="1">
    <citation type="submission" date="2004-06" db="EMBL/GenBank/DDBJ databases">
        <title>Molecular cloning of brain-derived neurotrophic factor (BDNF) of Spermophilus citellus.</title>
        <authorList>
            <person name="Stieler J.T."/>
            <person name="Strijkstra A.M."/>
        </authorList>
    </citation>
    <scope>NUCLEOTIDE SEQUENCE [MRNA]</scope>
</reference>
<dbReference type="EMBL" id="AY646114">
    <property type="protein sequence ID" value="AAV64180.1"/>
    <property type="molecule type" value="mRNA"/>
</dbReference>
<dbReference type="BMRB" id="Q4L0Y3"/>
<dbReference type="SMR" id="Q4L0Y3"/>
<dbReference type="GlyCosmos" id="Q4L0Y3">
    <property type="glycosylation" value="1 site, No reported glycans"/>
</dbReference>
<dbReference type="GO" id="GO:0030424">
    <property type="term" value="C:axon"/>
    <property type="evidence" value="ECO:0007669"/>
    <property type="project" value="TreeGrafter"/>
</dbReference>
<dbReference type="GO" id="GO:0030425">
    <property type="term" value="C:dendrite"/>
    <property type="evidence" value="ECO:0007669"/>
    <property type="project" value="TreeGrafter"/>
</dbReference>
<dbReference type="GO" id="GO:0005615">
    <property type="term" value="C:extracellular space"/>
    <property type="evidence" value="ECO:0007669"/>
    <property type="project" value="TreeGrafter"/>
</dbReference>
<dbReference type="GO" id="GO:0008021">
    <property type="term" value="C:synaptic vesicle"/>
    <property type="evidence" value="ECO:0007669"/>
    <property type="project" value="TreeGrafter"/>
</dbReference>
<dbReference type="GO" id="GO:0008083">
    <property type="term" value="F:growth factor activity"/>
    <property type="evidence" value="ECO:0007669"/>
    <property type="project" value="UniProtKB-KW"/>
</dbReference>
<dbReference type="GO" id="GO:0005163">
    <property type="term" value="F:nerve growth factor receptor binding"/>
    <property type="evidence" value="ECO:0007669"/>
    <property type="project" value="TreeGrafter"/>
</dbReference>
<dbReference type="GO" id="GO:0007169">
    <property type="term" value="P:cell surface receptor protein tyrosine kinase signaling pathway"/>
    <property type="evidence" value="ECO:0007669"/>
    <property type="project" value="TreeGrafter"/>
</dbReference>
<dbReference type="GO" id="GO:0050804">
    <property type="term" value="P:modulation of chemical synaptic transmission"/>
    <property type="evidence" value="ECO:0007669"/>
    <property type="project" value="TreeGrafter"/>
</dbReference>
<dbReference type="GO" id="GO:0043524">
    <property type="term" value="P:negative regulation of neuron apoptotic process"/>
    <property type="evidence" value="ECO:0007669"/>
    <property type="project" value="TreeGrafter"/>
</dbReference>
<dbReference type="GO" id="GO:0021675">
    <property type="term" value="P:nerve development"/>
    <property type="evidence" value="ECO:0007669"/>
    <property type="project" value="TreeGrafter"/>
</dbReference>
<dbReference type="GO" id="GO:0038180">
    <property type="term" value="P:nerve growth factor signaling pathway"/>
    <property type="evidence" value="ECO:0007669"/>
    <property type="project" value="TreeGrafter"/>
</dbReference>
<dbReference type="GO" id="GO:0048812">
    <property type="term" value="P:neuron projection morphogenesis"/>
    <property type="evidence" value="ECO:0007669"/>
    <property type="project" value="TreeGrafter"/>
</dbReference>
<dbReference type="FunFam" id="2.10.90.10:FF:000002">
    <property type="entry name" value="Brain-derived neurotrophic factor"/>
    <property type="match status" value="1"/>
</dbReference>
<dbReference type="Gene3D" id="2.10.90.10">
    <property type="entry name" value="Cystine-knot cytokines"/>
    <property type="match status" value="1"/>
</dbReference>
<dbReference type="InterPro" id="IPR020430">
    <property type="entry name" value="Brain-der_neurotrophic_factor"/>
</dbReference>
<dbReference type="InterPro" id="IPR029034">
    <property type="entry name" value="Cystine-knot_cytokine"/>
</dbReference>
<dbReference type="InterPro" id="IPR020408">
    <property type="entry name" value="Nerve_growth_factor-like"/>
</dbReference>
<dbReference type="InterPro" id="IPR002072">
    <property type="entry name" value="Nerve_growth_factor-rel"/>
</dbReference>
<dbReference type="InterPro" id="IPR019846">
    <property type="entry name" value="Nerve_growth_factor_CS"/>
</dbReference>
<dbReference type="PANTHER" id="PTHR11589:SF3">
    <property type="entry name" value="BRAIN-DERIVED NEUROTROPHIC FACTOR"/>
    <property type="match status" value="1"/>
</dbReference>
<dbReference type="PANTHER" id="PTHR11589">
    <property type="entry name" value="NERVE GROWTH FACTOR NGF -RELATED"/>
    <property type="match status" value="1"/>
</dbReference>
<dbReference type="Pfam" id="PF00243">
    <property type="entry name" value="NGF"/>
    <property type="match status" value="1"/>
</dbReference>
<dbReference type="PIRSF" id="PIRSF001789">
    <property type="entry name" value="NGF"/>
    <property type="match status" value="1"/>
</dbReference>
<dbReference type="PRINTS" id="PR01912">
    <property type="entry name" value="BDNFACTOR"/>
</dbReference>
<dbReference type="PRINTS" id="PR00268">
    <property type="entry name" value="NGF"/>
</dbReference>
<dbReference type="SMART" id="SM00140">
    <property type="entry name" value="NGF"/>
    <property type="match status" value="1"/>
</dbReference>
<dbReference type="SUPFAM" id="SSF57501">
    <property type="entry name" value="Cystine-knot cytokines"/>
    <property type="match status" value="1"/>
</dbReference>
<dbReference type="PROSITE" id="PS00248">
    <property type="entry name" value="NGF_1"/>
    <property type="match status" value="1"/>
</dbReference>
<dbReference type="PROSITE" id="PS50270">
    <property type="entry name" value="NGF_2"/>
    <property type="match status" value="1"/>
</dbReference>
<name>BDNF_SPECI</name>
<gene>
    <name type="primary">BDNF</name>
</gene>
<accession>Q4L0Y3</accession>
<feature type="signal peptide" evidence="3">
    <location>
        <begin position="1"/>
        <end position="18"/>
    </location>
</feature>
<feature type="chain" id="PRO_0000447542" description="Neurotrophic factor BDNF precursor form">
    <location>
        <begin position="19"/>
        <end position="247"/>
    </location>
</feature>
<feature type="propeptide" id="PRO_0000250497" evidence="1">
    <location>
        <begin position="19"/>
        <end position="128"/>
    </location>
</feature>
<feature type="chain" id="PRO_0000250498" description="Neurotrophic factor BDNF">
    <location>
        <begin position="129"/>
        <end position="247"/>
    </location>
</feature>
<feature type="site" description="Cleavage; by MBTPS1" evidence="2">
    <location>
        <begin position="57"/>
        <end position="58"/>
    </location>
</feature>
<feature type="glycosylation site" description="N-linked (GlcNAc...) asparagine" evidence="3">
    <location>
        <position position="121"/>
    </location>
</feature>
<feature type="disulfide bond" evidence="2">
    <location>
        <begin position="141"/>
        <end position="208"/>
    </location>
</feature>
<feature type="disulfide bond" evidence="2">
    <location>
        <begin position="186"/>
        <end position="237"/>
    </location>
</feature>
<feature type="disulfide bond" evidence="2">
    <location>
        <begin position="196"/>
        <end position="239"/>
    </location>
</feature>
<comment type="function">
    <text evidence="1 2">Important signaling molecule that activates signaling cascades downstream of NTRK2 (By similarity). During development, promotes the survival and differentiation of selected neuronal populations of the peripheral and central nervous systems. Participates in axonal growth, pathfinding and in the modulation of dendritic growth and morphology. Major regulator of synaptic transmission and plasticity at adult synapses in many regions of the CNS. The versatility of BDNF is emphasized by its contribution to a range of adaptive neuronal responses including long-term potentiation (LTP), long-term depression (LTD), certain forms of short-term synaptic plasticity, as well as homeostatic regulation of intrinsic neuronal excitability (By similarity).</text>
</comment>
<comment type="function">
    <molecule>Neurotrophic factor BDNF precursor form</molecule>
    <text evidence="1">Important signaling molecule that activates signaling cascades downstream of NTRK2. Activates signaling cascades via the heterodimeric receptor formed by NGFR and SORCS2. Signaling via NGFR and SORCS2 plays a role in synaptic plasticity and long-term depression (LTD). Binding to NGFR and SORCS2 promotes neuronal apoptosis. Promotes neuronal growth cone collapse.</text>
</comment>
<comment type="subunit">
    <text evidence="1 2">Monomers and homodimers (By similarity). Binds to NTRK2/TRKB. Can form heterodimers with other neurotrophin family members, such as NTF3 and NTF4 (in vitro), but the physiological relevance of this is not clear (By similarity). BDNF precursor form: interacts with the heterodimer formed by NGFR and SORCS2. Mature BDNF has much lower affinity for the heterodimer formed by NGFR and SORCS2 (By similarity).</text>
</comment>
<comment type="subcellular location">
    <subcellularLocation>
        <location evidence="2">Secreted</location>
    </subcellularLocation>
</comment>
<comment type="subcellular location">
    <molecule>Neurotrophic factor BDNF precursor form</molecule>
    <subcellularLocation>
        <location evidence="2">Secreted</location>
    </subcellularLocation>
    <text evidence="2">A proportion of BDNF is secreted as immature precursor (proBDNF).</text>
</comment>
<comment type="PTM">
    <molecule>Neurotrophic factor BDNF precursor form</molecule>
    <text evidence="2">N-glycosylated and glycosulfated, contrary to mature BDNF.</text>
</comment>
<comment type="PTM">
    <text evidence="2">Mature BDNF is produced by proteolytic removal of the propeptide, catalyzed by a FURIN family member. In addition, the precursor form is proteolytically cleaved within the propeptide, but this is not an obligatory intermediate for the production of mature BDNF. Can be converted into mature BDNF by plasmin (PLG).</text>
</comment>
<comment type="similarity">
    <text evidence="4">Belongs to the NGF-beta family.</text>
</comment>
<evidence type="ECO:0000250" key="1">
    <source>
        <dbReference type="UniProtKB" id="P21237"/>
    </source>
</evidence>
<evidence type="ECO:0000250" key="2">
    <source>
        <dbReference type="UniProtKB" id="P23560"/>
    </source>
</evidence>
<evidence type="ECO:0000255" key="3"/>
<evidence type="ECO:0000305" key="4"/>
<sequence length="247" mass="27834">MTILFLTMVISYFGCMKAAPMKEANVRGQGSLAYPGVRTHGTLESVNGPKAGSRGLTSLADTFEHVIEELLDEDQKVRPNEENNKDADLYTSRVMLSSQVPLEPPLLFLLEEYKNYLDAANMSMRVRRHSDPARRGELSVCDSISEWVTAADKKTAVDMSGGTVTVLEKVPVSKGQLKQYFYETKCNPMGYTKEGCRGIDKRHWNSQCRTTQSYVRALTMDSKKRIGWRFIRIDTSCVCTLTIKRGR</sequence>
<organism>
    <name type="scientific">Spermophilus citellus</name>
    <name type="common">European ground squirrel</name>
    <name type="synonym">Citellus citellus</name>
    <dbReference type="NCBI Taxonomy" id="9997"/>
    <lineage>
        <taxon>Eukaryota</taxon>
        <taxon>Metazoa</taxon>
        <taxon>Chordata</taxon>
        <taxon>Craniata</taxon>
        <taxon>Vertebrata</taxon>
        <taxon>Euteleostomi</taxon>
        <taxon>Mammalia</taxon>
        <taxon>Eutheria</taxon>
        <taxon>Euarchontoglires</taxon>
        <taxon>Glires</taxon>
        <taxon>Rodentia</taxon>
        <taxon>Sciuromorpha</taxon>
        <taxon>Sciuridae</taxon>
        <taxon>Xerinae</taxon>
        <taxon>Marmotini</taxon>
        <taxon>Spermophilus</taxon>
    </lineage>
</organism>